<accession>C0ZW96</accession>
<feature type="chain" id="PRO_1000212123" description="Co-chaperonin GroES">
    <location>
        <begin position="1"/>
        <end position="99"/>
    </location>
</feature>
<proteinExistence type="inferred from homology"/>
<gene>
    <name evidence="1" type="primary">groES</name>
    <name evidence="1" type="synonym">groS</name>
    <name type="ordered locus">RER_19230</name>
</gene>
<comment type="function">
    <text evidence="1">Together with the chaperonin GroEL, plays an essential role in assisting protein folding. The GroEL-GroES system forms a nano-cage that allows encapsulation of the non-native substrate proteins and provides a physical environment optimized to promote and accelerate protein folding. GroES binds to the apical surface of the GroEL ring, thereby capping the opening of the GroEL channel.</text>
</comment>
<comment type="subunit">
    <text evidence="1">Heptamer of 7 subunits arranged in a ring. Interacts with the chaperonin GroEL.</text>
</comment>
<comment type="subcellular location">
    <subcellularLocation>
        <location evidence="1">Cytoplasm</location>
    </subcellularLocation>
</comment>
<comment type="similarity">
    <text evidence="1">Belongs to the GroES chaperonin family.</text>
</comment>
<keyword id="KW-0143">Chaperone</keyword>
<keyword id="KW-0963">Cytoplasm</keyword>
<evidence type="ECO:0000255" key="1">
    <source>
        <dbReference type="HAMAP-Rule" id="MF_00580"/>
    </source>
</evidence>
<name>CH10_RHOE4</name>
<organism>
    <name type="scientific">Rhodococcus erythropolis (strain PR4 / NBRC 100887)</name>
    <dbReference type="NCBI Taxonomy" id="234621"/>
    <lineage>
        <taxon>Bacteria</taxon>
        <taxon>Bacillati</taxon>
        <taxon>Actinomycetota</taxon>
        <taxon>Actinomycetes</taxon>
        <taxon>Mycobacteriales</taxon>
        <taxon>Nocardiaceae</taxon>
        <taxon>Rhodococcus</taxon>
        <taxon>Rhodococcus erythropolis group</taxon>
    </lineage>
</organism>
<sequence>MASVNIKPLEDKILVQANEAETTTASGLVIPDTAKEKPQEGTVVAVGEGRVNEQGNRIPVDVKEGDTVIYSKYGGTEIKYAGQEYLILSARDVLAVVSK</sequence>
<dbReference type="EMBL" id="AP008957">
    <property type="protein sequence ID" value="BAH32631.1"/>
    <property type="molecule type" value="Genomic_DNA"/>
</dbReference>
<dbReference type="RefSeq" id="WP_003940763.1">
    <property type="nucleotide sequence ID" value="NC_012490.1"/>
</dbReference>
<dbReference type="SMR" id="C0ZW96"/>
<dbReference type="GeneID" id="93803243"/>
<dbReference type="KEGG" id="rer:RER_19230"/>
<dbReference type="eggNOG" id="COG0234">
    <property type="taxonomic scope" value="Bacteria"/>
</dbReference>
<dbReference type="HOGENOM" id="CLU_132825_2_0_11"/>
<dbReference type="Proteomes" id="UP000002204">
    <property type="component" value="Chromosome"/>
</dbReference>
<dbReference type="GO" id="GO:0005737">
    <property type="term" value="C:cytoplasm"/>
    <property type="evidence" value="ECO:0007669"/>
    <property type="project" value="UniProtKB-SubCell"/>
</dbReference>
<dbReference type="GO" id="GO:0005524">
    <property type="term" value="F:ATP binding"/>
    <property type="evidence" value="ECO:0007669"/>
    <property type="project" value="InterPro"/>
</dbReference>
<dbReference type="GO" id="GO:0046872">
    <property type="term" value="F:metal ion binding"/>
    <property type="evidence" value="ECO:0007669"/>
    <property type="project" value="TreeGrafter"/>
</dbReference>
<dbReference type="GO" id="GO:0044183">
    <property type="term" value="F:protein folding chaperone"/>
    <property type="evidence" value="ECO:0007669"/>
    <property type="project" value="InterPro"/>
</dbReference>
<dbReference type="GO" id="GO:0051087">
    <property type="term" value="F:protein-folding chaperone binding"/>
    <property type="evidence" value="ECO:0007669"/>
    <property type="project" value="TreeGrafter"/>
</dbReference>
<dbReference type="GO" id="GO:0051082">
    <property type="term" value="F:unfolded protein binding"/>
    <property type="evidence" value="ECO:0007669"/>
    <property type="project" value="TreeGrafter"/>
</dbReference>
<dbReference type="GO" id="GO:0051085">
    <property type="term" value="P:chaperone cofactor-dependent protein refolding"/>
    <property type="evidence" value="ECO:0007669"/>
    <property type="project" value="TreeGrafter"/>
</dbReference>
<dbReference type="CDD" id="cd00320">
    <property type="entry name" value="cpn10"/>
    <property type="match status" value="1"/>
</dbReference>
<dbReference type="FunFam" id="2.30.33.40:FF:000001">
    <property type="entry name" value="10 kDa chaperonin"/>
    <property type="match status" value="1"/>
</dbReference>
<dbReference type="Gene3D" id="2.30.33.40">
    <property type="entry name" value="GroES chaperonin"/>
    <property type="match status" value="1"/>
</dbReference>
<dbReference type="HAMAP" id="MF_00580">
    <property type="entry name" value="CH10"/>
    <property type="match status" value="1"/>
</dbReference>
<dbReference type="InterPro" id="IPR020818">
    <property type="entry name" value="Chaperonin_GroES"/>
</dbReference>
<dbReference type="InterPro" id="IPR037124">
    <property type="entry name" value="Chaperonin_GroES_sf"/>
</dbReference>
<dbReference type="InterPro" id="IPR018369">
    <property type="entry name" value="Chaprnonin_Cpn10_CS"/>
</dbReference>
<dbReference type="InterPro" id="IPR011032">
    <property type="entry name" value="GroES-like_sf"/>
</dbReference>
<dbReference type="NCBIfam" id="NF001530">
    <property type="entry name" value="PRK00364.1-6"/>
    <property type="match status" value="1"/>
</dbReference>
<dbReference type="NCBIfam" id="NF001531">
    <property type="entry name" value="PRK00364.2-2"/>
    <property type="match status" value="1"/>
</dbReference>
<dbReference type="NCBIfam" id="NF001533">
    <property type="entry name" value="PRK00364.2-4"/>
    <property type="match status" value="1"/>
</dbReference>
<dbReference type="NCBIfam" id="NF001534">
    <property type="entry name" value="PRK00364.2-5"/>
    <property type="match status" value="1"/>
</dbReference>
<dbReference type="PANTHER" id="PTHR10772">
    <property type="entry name" value="10 KDA HEAT SHOCK PROTEIN"/>
    <property type="match status" value="1"/>
</dbReference>
<dbReference type="PANTHER" id="PTHR10772:SF58">
    <property type="entry name" value="CO-CHAPERONIN GROES"/>
    <property type="match status" value="1"/>
</dbReference>
<dbReference type="Pfam" id="PF00166">
    <property type="entry name" value="Cpn10"/>
    <property type="match status" value="1"/>
</dbReference>
<dbReference type="PRINTS" id="PR00297">
    <property type="entry name" value="CHAPERONIN10"/>
</dbReference>
<dbReference type="SMART" id="SM00883">
    <property type="entry name" value="Cpn10"/>
    <property type="match status" value="1"/>
</dbReference>
<dbReference type="SUPFAM" id="SSF50129">
    <property type="entry name" value="GroES-like"/>
    <property type="match status" value="1"/>
</dbReference>
<dbReference type="PROSITE" id="PS00681">
    <property type="entry name" value="CHAPERONINS_CPN10"/>
    <property type="match status" value="1"/>
</dbReference>
<reference key="1">
    <citation type="submission" date="2005-03" db="EMBL/GenBank/DDBJ databases">
        <title>Comparison of the complete genome sequences of Rhodococcus erythropolis PR4 and Rhodococcus opacus B4.</title>
        <authorList>
            <person name="Takarada H."/>
            <person name="Sekine M."/>
            <person name="Hosoyama A."/>
            <person name="Yamada R."/>
            <person name="Fujisawa T."/>
            <person name="Omata S."/>
            <person name="Shimizu A."/>
            <person name="Tsukatani N."/>
            <person name="Tanikawa S."/>
            <person name="Fujita N."/>
            <person name="Harayama S."/>
        </authorList>
    </citation>
    <scope>NUCLEOTIDE SEQUENCE [LARGE SCALE GENOMIC DNA]</scope>
    <source>
        <strain>PR4 / NBRC 100887</strain>
    </source>
</reference>
<protein>
    <recommendedName>
        <fullName evidence="1">Co-chaperonin GroES</fullName>
    </recommendedName>
    <alternativeName>
        <fullName evidence="1">10 kDa chaperonin</fullName>
    </alternativeName>
    <alternativeName>
        <fullName evidence="1">Chaperonin-10</fullName>
        <shortName evidence="1">Cpn10</shortName>
    </alternativeName>
</protein>